<keyword id="KW-0800">Toxin</keyword>
<evidence type="ECO:0000250" key="1">
    <source>
        <dbReference type="UniProtKB" id="A0A067SLB9"/>
    </source>
</evidence>
<evidence type="ECO:0000303" key="2">
    <source>
    </source>
</evidence>
<evidence type="ECO:0000305" key="3"/>
<evidence type="ECO:0000305" key="4">
    <source>
    </source>
</evidence>
<organism>
    <name type="scientific">Amanita bisporigera</name>
    <name type="common">Destroying angel</name>
    <dbReference type="NCBI Taxonomy" id="87325"/>
    <lineage>
        <taxon>Eukaryota</taxon>
        <taxon>Fungi</taxon>
        <taxon>Dikarya</taxon>
        <taxon>Basidiomycota</taxon>
        <taxon>Agaricomycotina</taxon>
        <taxon>Agaricomycetes</taxon>
        <taxon>Agaricomycetidae</taxon>
        <taxon>Agaricales</taxon>
        <taxon>Pluteineae</taxon>
        <taxon>Amanitaceae</taxon>
        <taxon>Amanita</taxon>
    </lineage>
</organism>
<sequence>MSDINTARLPFFQPPEFRPPCVGDDIEMVLTRGE</sequence>
<name>MSD3_AMABI</name>
<feature type="propeptide" id="PRO_0000443641" evidence="4">
    <location>
        <begin position="1"/>
        <end position="10"/>
    </location>
</feature>
<feature type="peptide" id="PRO_0000443642" description="Toxin MSD3" evidence="4">
    <location>
        <begin position="11"/>
        <end position="20"/>
    </location>
</feature>
<feature type="propeptide" id="PRO_0000443643" evidence="4">
    <location>
        <begin position="21"/>
        <end position="34"/>
    </location>
</feature>
<feature type="cross-link" description="Cyclopeptide (Phe-Pro)" evidence="4">
    <location>
        <begin position="11"/>
        <end position="20"/>
    </location>
</feature>
<feature type="non-terminal residue" evidence="3">
    <location>
        <position position="34"/>
    </location>
</feature>
<accession>A8W7N1</accession>
<reference key="1">
    <citation type="journal article" date="2007" name="Proc. Natl. Acad. Sci. U.S.A.">
        <title>Gene family encoding the major toxins of lethal Amanita mushrooms.</title>
        <authorList>
            <person name="Hallen H.E."/>
            <person name="Luo H."/>
            <person name="Scott-Craig J.S."/>
            <person name="Walton J.D."/>
        </authorList>
    </citation>
    <scope>NUCLEOTIDE SEQUENCE [GENOMIC DNA]</scope>
    <scope>FUNCTION</scope>
</reference>
<dbReference type="EMBL" id="EU196146">
    <property type="protein sequence ID" value="ABW87775.1"/>
    <property type="molecule type" value="Genomic_DNA"/>
</dbReference>
<dbReference type="GO" id="GO:0090729">
    <property type="term" value="F:toxin activity"/>
    <property type="evidence" value="ECO:0007669"/>
    <property type="project" value="UniProtKB-KW"/>
</dbReference>
<dbReference type="InterPro" id="IPR027582">
    <property type="entry name" value="Amanitin/phalloidin"/>
</dbReference>
<dbReference type="NCBIfam" id="TIGR04309">
    <property type="entry name" value="amanitin"/>
    <property type="match status" value="1"/>
</dbReference>
<comment type="function">
    <text evidence="4">Probable toxin that belongs to the MSDIN-like toxin family responsible for a large number of food poisoning cases and deaths (PubMed:18025465).</text>
</comment>
<comment type="PTM">
    <text evidence="1 4">Processed by the macrocyclase-peptidase enzyme POPB to yield a toxic cyclic decapeptide (PubMed:18025465). POPB first removes 10 residues from the N-terminus (By similarity). Conformational trapping of the remaining peptide forces the enzyme to release this intermediate rather than proceed to macrocyclization (By similarity). The enzyme rebinds the remaining peptide in a different conformation and catalyzes macrocyclization of the N-terminal 10 residues (By similarity).</text>
</comment>
<comment type="similarity">
    <text evidence="3">Belongs to the MSDIN fungal toxin family.</text>
</comment>
<proteinExistence type="inferred from homology"/>
<protein>
    <recommendedName>
        <fullName evidence="2">MSDIN-like toxin proprotein 3</fullName>
    </recommendedName>
    <component>
        <recommendedName>
            <fullName evidence="2">Toxin MSD3</fullName>
        </recommendedName>
    </component>
</protein>
<gene>
    <name evidence="2" type="primary">MSD3</name>
</gene>